<reference key="1">
    <citation type="journal article" date="2006" name="J. Bacteriol.">
        <title>Complete genome sequence of Yersinia pestis strains Antiqua and Nepal516: evidence of gene reduction in an emerging pathogen.</title>
        <authorList>
            <person name="Chain P.S.G."/>
            <person name="Hu P."/>
            <person name="Malfatti S.A."/>
            <person name="Radnedge L."/>
            <person name="Larimer F."/>
            <person name="Vergez L.M."/>
            <person name="Worsham P."/>
            <person name="Chu M.C."/>
            <person name="Andersen G.L."/>
        </authorList>
    </citation>
    <scope>NUCLEOTIDE SEQUENCE [LARGE SCALE GENOMIC DNA]</scope>
    <source>
        <strain>Antiqua</strain>
    </source>
</reference>
<gene>
    <name type="ordered locus">YPA_2615</name>
</gene>
<dbReference type="EMBL" id="CP000308">
    <property type="protein sequence ID" value="ABG14577.1"/>
    <property type="molecule type" value="Genomic_DNA"/>
</dbReference>
<dbReference type="RefSeq" id="WP_002208604.1">
    <property type="nucleotide sequence ID" value="NZ_CP009906.1"/>
</dbReference>
<dbReference type="SMR" id="Q1C4P5"/>
<dbReference type="KEGG" id="ypa:YPA_2615"/>
<dbReference type="Proteomes" id="UP000001971">
    <property type="component" value="Chromosome"/>
</dbReference>
<dbReference type="GO" id="GO:0043590">
    <property type="term" value="C:bacterial nucleoid"/>
    <property type="evidence" value="ECO:0007669"/>
    <property type="project" value="UniProtKB-UniRule"/>
</dbReference>
<dbReference type="GO" id="GO:0005829">
    <property type="term" value="C:cytosol"/>
    <property type="evidence" value="ECO:0007669"/>
    <property type="project" value="TreeGrafter"/>
</dbReference>
<dbReference type="GO" id="GO:0003677">
    <property type="term" value="F:DNA binding"/>
    <property type="evidence" value="ECO:0007669"/>
    <property type="project" value="UniProtKB-UniRule"/>
</dbReference>
<dbReference type="FunFam" id="3.30.1310.10:FF:000001">
    <property type="entry name" value="Nucleoid-associated protein YbaB"/>
    <property type="match status" value="1"/>
</dbReference>
<dbReference type="Gene3D" id="3.30.1310.10">
    <property type="entry name" value="Nucleoid-associated protein YbaB-like domain"/>
    <property type="match status" value="1"/>
</dbReference>
<dbReference type="HAMAP" id="MF_00274">
    <property type="entry name" value="DNA_YbaB_EbfC"/>
    <property type="match status" value="1"/>
</dbReference>
<dbReference type="InterPro" id="IPR036894">
    <property type="entry name" value="YbaB-like_sf"/>
</dbReference>
<dbReference type="InterPro" id="IPR004401">
    <property type="entry name" value="YbaB/EbfC"/>
</dbReference>
<dbReference type="NCBIfam" id="TIGR00103">
    <property type="entry name" value="DNA_YbaB_EbfC"/>
    <property type="match status" value="1"/>
</dbReference>
<dbReference type="PANTHER" id="PTHR33449">
    <property type="entry name" value="NUCLEOID-ASSOCIATED PROTEIN YBAB"/>
    <property type="match status" value="1"/>
</dbReference>
<dbReference type="PANTHER" id="PTHR33449:SF1">
    <property type="entry name" value="NUCLEOID-ASSOCIATED PROTEIN YBAB"/>
    <property type="match status" value="1"/>
</dbReference>
<dbReference type="Pfam" id="PF02575">
    <property type="entry name" value="YbaB_DNA_bd"/>
    <property type="match status" value="1"/>
</dbReference>
<dbReference type="PIRSF" id="PIRSF004555">
    <property type="entry name" value="UCP004555"/>
    <property type="match status" value="1"/>
</dbReference>
<dbReference type="SUPFAM" id="SSF82607">
    <property type="entry name" value="YbaB-like"/>
    <property type="match status" value="1"/>
</dbReference>
<comment type="function">
    <text evidence="1">Binds to DNA and alters its conformation. May be involved in regulation of gene expression, nucleoid organization and DNA protection.</text>
</comment>
<comment type="subunit">
    <text evidence="1">Homodimer.</text>
</comment>
<comment type="subcellular location">
    <subcellularLocation>
        <location evidence="1">Cytoplasm</location>
        <location evidence="1">Nucleoid</location>
    </subcellularLocation>
</comment>
<comment type="similarity">
    <text evidence="1">Belongs to the YbaB/EbfC family.</text>
</comment>
<feature type="chain" id="PRO_1000003871" description="Nucleoid-associated protein YPA_2615">
    <location>
        <begin position="1"/>
        <end position="110"/>
    </location>
</feature>
<feature type="region of interest" description="Disordered" evidence="2">
    <location>
        <begin position="90"/>
        <end position="110"/>
    </location>
</feature>
<organism>
    <name type="scientific">Yersinia pestis bv. Antiqua (strain Antiqua)</name>
    <dbReference type="NCBI Taxonomy" id="360102"/>
    <lineage>
        <taxon>Bacteria</taxon>
        <taxon>Pseudomonadati</taxon>
        <taxon>Pseudomonadota</taxon>
        <taxon>Gammaproteobacteria</taxon>
        <taxon>Enterobacterales</taxon>
        <taxon>Yersiniaceae</taxon>
        <taxon>Yersinia</taxon>
    </lineage>
</organism>
<keyword id="KW-0963">Cytoplasm</keyword>
<keyword id="KW-0238">DNA-binding</keyword>
<proteinExistence type="inferred from homology"/>
<accession>Q1C4P5</accession>
<sequence length="110" mass="12093">MFGKGGIGNLMKQAQQMQEKMQQMQEEVAKLEVTGESGAGLVKVTINGAHNCRRVEIDPSLLVEDDKEMLEDLIAAALNDAARRIDETQKEKMASVSNGMQLPPGFKMPF</sequence>
<name>Y2615_YERPA</name>
<protein>
    <recommendedName>
        <fullName evidence="1">Nucleoid-associated protein YPA_2615</fullName>
    </recommendedName>
</protein>
<evidence type="ECO:0000255" key="1">
    <source>
        <dbReference type="HAMAP-Rule" id="MF_00274"/>
    </source>
</evidence>
<evidence type="ECO:0000256" key="2">
    <source>
        <dbReference type="SAM" id="MobiDB-lite"/>
    </source>
</evidence>